<feature type="signal peptide" evidence="2">
    <location>
        <begin position="1"/>
        <end position="30"/>
    </location>
</feature>
<feature type="chain" id="PRO_0000021211" description="Protein EVI2A">
    <location>
        <begin position="31"/>
        <end position="236"/>
    </location>
</feature>
<feature type="topological domain" description="Extracellular" evidence="2">
    <location>
        <begin position="31"/>
        <end position="133"/>
    </location>
</feature>
<feature type="transmembrane region" description="Helical" evidence="2">
    <location>
        <begin position="134"/>
        <end position="154"/>
    </location>
</feature>
<feature type="topological domain" description="Cytoplasmic" evidence="2">
    <location>
        <begin position="155"/>
        <end position="236"/>
    </location>
</feature>
<feature type="region of interest" description="Disordered" evidence="3">
    <location>
        <begin position="217"/>
        <end position="236"/>
    </location>
</feature>
<feature type="compositionally biased region" description="Basic and acidic residues" evidence="3">
    <location>
        <begin position="218"/>
        <end position="236"/>
    </location>
</feature>
<feature type="modified residue" description="Phosphoserine" evidence="1">
    <location>
        <position position="211"/>
    </location>
</feature>
<feature type="glycosylation site" description="N-linked (GlcNAc...) asparagine" evidence="2">
    <location>
        <position position="31"/>
    </location>
</feature>
<feature type="glycosylation site" description="N-linked (GlcNAc...) asparagine" evidence="2">
    <location>
        <position position="38"/>
    </location>
</feature>
<feature type="glycosylation site" description="N-linked (GlcNAc...) asparagine" evidence="2">
    <location>
        <position position="49"/>
    </location>
</feature>
<feature type="glycosylation site" description="N-linked (GlcNAc...) asparagine" evidence="2">
    <location>
        <position position="73"/>
    </location>
</feature>
<feature type="glycosylation site" description="N-linked (GlcNAc...) asparagine" evidence="2">
    <location>
        <position position="112"/>
    </location>
</feature>
<feature type="splice variant" id="VSP_038859" description="In isoform 2." evidence="4">
    <original>M</original>
    <variation>MLLRSWFGNKDFQALPILARLPSM</variation>
    <location>
        <position position="1"/>
    </location>
</feature>
<evidence type="ECO:0000250" key="1">
    <source>
        <dbReference type="UniProtKB" id="P20934"/>
    </source>
</evidence>
<evidence type="ECO:0000255" key="2"/>
<evidence type="ECO:0000256" key="3">
    <source>
        <dbReference type="SAM" id="MobiDB-lite"/>
    </source>
</evidence>
<evidence type="ECO:0000303" key="4">
    <source>
    </source>
</evidence>
<evidence type="ECO:0000305" key="5"/>
<organism>
    <name type="scientific">Homo sapiens</name>
    <name type="common">Human</name>
    <dbReference type="NCBI Taxonomy" id="9606"/>
    <lineage>
        <taxon>Eukaryota</taxon>
        <taxon>Metazoa</taxon>
        <taxon>Chordata</taxon>
        <taxon>Craniata</taxon>
        <taxon>Vertebrata</taxon>
        <taxon>Euteleostomi</taxon>
        <taxon>Mammalia</taxon>
        <taxon>Eutheria</taxon>
        <taxon>Euarchontoglires</taxon>
        <taxon>Primates</taxon>
        <taxon>Haplorrhini</taxon>
        <taxon>Catarrhini</taxon>
        <taxon>Hominidae</taxon>
        <taxon>Homo</taxon>
    </lineage>
</organism>
<dbReference type="EMBL" id="M55266">
    <property type="status" value="NOT_ANNOTATED_CDS"/>
    <property type="molecule type" value="Genomic_DNA"/>
</dbReference>
<dbReference type="EMBL" id="M55267">
    <property type="protein sequence ID" value="AAA52413.1"/>
    <property type="status" value="ALT_INIT"/>
    <property type="molecule type" value="Genomic_DNA"/>
</dbReference>
<dbReference type="EMBL" id="AK295311">
    <property type="protein sequence ID" value="BAG58290.1"/>
    <property type="molecule type" value="mRNA"/>
</dbReference>
<dbReference type="EMBL" id="AK312348">
    <property type="protein sequence ID" value="BAG35269.1"/>
    <property type="status" value="ALT_INIT"/>
    <property type="molecule type" value="mRNA"/>
</dbReference>
<dbReference type="EMBL" id="BC035572">
    <property type="protein sequence ID" value="AAH35572.2"/>
    <property type="molecule type" value="mRNA"/>
</dbReference>
<dbReference type="CCDS" id="CCDS32608.1">
    <molecule id="P22794-2"/>
</dbReference>
<dbReference type="CCDS" id="CCDS42293.1">
    <molecule id="P22794-1"/>
</dbReference>
<dbReference type="PIR" id="A35329">
    <property type="entry name" value="A35329"/>
</dbReference>
<dbReference type="RefSeq" id="NP_001003927.1">
    <molecule id="P22794-2"/>
    <property type="nucleotide sequence ID" value="NM_001003927.3"/>
</dbReference>
<dbReference type="RefSeq" id="NP_055025.2">
    <molecule id="P22794-1"/>
    <property type="nucleotide sequence ID" value="NM_014210.4"/>
</dbReference>
<dbReference type="SMR" id="P22794"/>
<dbReference type="BioGRID" id="108424">
    <property type="interactions" value="20"/>
</dbReference>
<dbReference type="FunCoup" id="P22794">
    <property type="interactions" value="10"/>
</dbReference>
<dbReference type="IntAct" id="P22794">
    <property type="interactions" value="19"/>
</dbReference>
<dbReference type="STRING" id="9606.ENSP00000247270"/>
<dbReference type="GlyCosmos" id="P22794">
    <property type="glycosylation" value="5 sites, No reported glycans"/>
</dbReference>
<dbReference type="GlyGen" id="P22794">
    <property type="glycosylation" value="5 sites"/>
</dbReference>
<dbReference type="iPTMnet" id="P22794"/>
<dbReference type="PhosphoSitePlus" id="P22794"/>
<dbReference type="BioMuta" id="EVI2A"/>
<dbReference type="DMDM" id="292495009"/>
<dbReference type="MassIVE" id="P22794"/>
<dbReference type="PaxDb" id="9606-ENSP00000247270"/>
<dbReference type="PeptideAtlas" id="P22794"/>
<dbReference type="ProteomicsDB" id="54039">
    <molecule id="P22794-1"/>
</dbReference>
<dbReference type="ProteomicsDB" id="54040">
    <molecule id="P22794-2"/>
</dbReference>
<dbReference type="Antibodypedia" id="27020">
    <property type="antibodies" value="79 antibodies from 20 providers"/>
</dbReference>
<dbReference type="DNASU" id="2123"/>
<dbReference type="Ensembl" id="ENST00000247270.3">
    <molecule id="P22794-2"/>
    <property type="protein sequence ID" value="ENSP00000247270.3"/>
    <property type="gene ID" value="ENSG00000126860.12"/>
</dbReference>
<dbReference type="Ensembl" id="ENST00000461237.5">
    <molecule id="P22794-1"/>
    <property type="protein sequence ID" value="ENSP00000418064.1"/>
    <property type="gene ID" value="ENSG00000126860.12"/>
</dbReference>
<dbReference type="Ensembl" id="ENST00000462804.3">
    <molecule id="P22794-1"/>
    <property type="protein sequence ID" value="ENSP00000420557.3"/>
    <property type="gene ID" value="ENSG00000126860.12"/>
</dbReference>
<dbReference type="GeneID" id="2123"/>
<dbReference type="KEGG" id="hsa:2123"/>
<dbReference type="MANE-Select" id="ENST00000462804.3">
    <property type="protein sequence ID" value="ENSP00000420557.3"/>
    <property type="RefSeq nucleotide sequence ID" value="NM_014210.4"/>
    <property type="RefSeq protein sequence ID" value="NP_055025.2"/>
</dbReference>
<dbReference type="UCSC" id="uc002hgl.4">
    <molecule id="P22794-1"/>
    <property type="organism name" value="human"/>
</dbReference>
<dbReference type="AGR" id="HGNC:3499"/>
<dbReference type="CTD" id="2123"/>
<dbReference type="DisGeNET" id="2123"/>
<dbReference type="GeneCards" id="EVI2A"/>
<dbReference type="HGNC" id="HGNC:3499">
    <property type="gene designation" value="EVI2A"/>
</dbReference>
<dbReference type="HPA" id="ENSG00000126860">
    <property type="expression patterns" value="Group enriched (brain, lymphoid tissue)"/>
</dbReference>
<dbReference type="MalaCards" id="EVI2A"/>
<dbReference type="MIM" id="158380">
    <property type="type" value="gene"/>
</dbReference>
<dbReference type="neXtProt" id="NX_P22794"/>
<dbReference type="OpenTargets" id="ENSG00000126860"/>
<dbReference type="PharmGKB" id="PA27913"/>
<dbReference type="VEuPathDB" id="HostDB:ENSG00000126860"/>
<dbReference type="eggNOG" id="ENOG502S3SG">
    <property type="taxonomic scope" value="Eukaryota"/>
</dbReference>
<dbReference type="GeneTree" id="ENSGT00390000003004"/>
<dbReference type="HOGENOM" id="CLU_073339_0_0_1"/>
<dbReference type="InParanoid" id="P22794"/>
<dbReference type="OrthoDB" id="9448427at2759"/>
<dbReference type="PAN-GO" id="P22794">
    <property type="GO annotations" value="0 GO annotations based on evolutionary models"/>
</dbReference>
<dbReference type="PhylomeDB" id="P22794"/>
<dbReference type="TreeFam" id="TF336075"/>
<dbReference type="PathwayCommons" id="P22794"/>
<dbReference type="SignaLink" id="P22794"/>
<dbReference type="BioGRID-ORCS" id="2123">
    <property type="hits" value="15 hits in 1146 CRISPR screens"/>
</dbReference>
<dbReference type="ChiTaRS" id="EVI2A">
    <property type="organism name" value="human"/>
</dbReference>
<dbReference type="GenomeRNAi" id="2123"/>
<dbReference type="Pharos" id="P22794">
    <property type="development level" value="Tbio"/>
</dbReference>
<dbReference type="PRO" id="PR:P22794"/>
<dbReference type="Proteomes" id="UP000005640">
    <property type="component" value="Chromosome 17"/>
</dbReference>
<dbReference type="RNAct" id="P22794">
    <property type="molecule type" value="protein"/>
</dbReference>
<dbReference type="Bgee" id="ENSG00000126860">
    <property type="expression patterns" value="Expressed in corpus callosum and 179 other cell types or tissues"/>
</dbReference>
<dbReference type="GO" id="GO:0005929">
    <property type="term" value="C:cilium"/>
    <property type="evidence" value="ECO:0000314"/>
    <property type="project" value="HPA"/>
</dbReference>
<dbReference type="GO" id="GO:0005829">
    <property type="term" value="C:cytosol"/>
    <property type="evidence" value="ECO:0000314"/>
    <property type="project" value="HPA"/>
</dbReference>
<dbReference type="GO" id="GO:0005794">
    <property type="term" value="C:Golgi apparatus"/>
    <property type="evidence" value="ECO:0000314"/>
    <property type="project" value="HPA"/>
</dbReference>
<dbReference type="GO" id="GO:0043231">
    <property type="term" value="C:intracellular membrane-bounded organelle"/>
    <property type="evidence" value="ECO:0000314"/>
    <property type="project" value="HPA"/>
</dbReference>
<dbReference type="GO" id="GO:0005886">
    <property type="term" value="C:plasma membrane"/>
    <property type="evidence" value="ECO:0000314"/>
    <property type="project" value="HPA"/>
</dbReference>
<dbReference type="GO" id="GO:0004888">
    <property type="term" value="F:transmembrane signaling receptor activity"/>
    <property type="evidence" value="ECO:0000303"/>
    <property type="project" value="UniProtKB"/>
</dbReference>
<dbReference type="InterPro" id="IPR008608">
    <property type="entry name" value="Ectropic_vir_integratn_site_2A"/>
</dbReference>
<dbReference type="PANTHER" id="PTHR15568">
    <property type="entry name" value="ECOTROPIC VIRAL INTEGRATION SITE 2A"/>
    <property type="match status" value="1"/>
</dbReference>
<dbReference type="PANTHER" id="PTHR15568:SF0">
    <property type="entry name" value="PROTEIN EVI2A"/>
    <property type="match status" value="1"/>
</dbReference>
<dbReference type="Pfam" id="PF05399">
    <property type="entry name" value="EVI2A"/>
    <property type="match status" value="1"/>
</dbReference>
<dbReference type="PIRSF" id="PIRSF019625">
    <property type="entry name" value="EVI_S2A"/>
    <property type="match status" value="1"/>
</dbReference>
<protein>
    <recommendedName>
        <fullName>Protein EVI2A</fullName>
    </recommendedName>
    <alternativeName>
        <fullName>Ecotropic viral integration site 2A protein homolog</fullName>
        <shortName>EVI-2A</shortName>
    </alternativeName>
</protein>
<name>EVI2A_HUMAN</name>
<accession>P22794</accession>
<accession>B2R5X2</accession>
<accession>B4DHX8</accession>
<proteinExistence type="evidence at protein level"/>
<keyword id="KW-0025">Alternative splicing</keyword>
<keyword id="KW-0325">Glycoprotein</keyword>
<keyword id="KW-0472">Membrane</keyword>
<keyword id="KW-0597">Phosphoprotein</keyword>
<keyword id="KW-1267">Proteomics identification</keyword>
<keyword id="KW-0656">Proto-oncogene</keyword>
<keyword id="KW-1185">Reference proteome</keyword>
<keyword id="KW-0732">Signal</keyword>
<keyword id="KW-0812">Transmembrane</keyword>
<keyword id="KW-1133">Transmembrane helix</keyword>
<comment type="function">
    <text>May complex with itself or/and other proteins within the membrane, to function as part of a cell-surface receptor.</text>
</comment>
<comment type="interaction">
    <interactant intactId="EBI-2870359">
        <id>P22794</id>
    </interactant>
    <interactant intactId="EBI-721179">
        <id>P27449</id>
        <label>ATP6V0C</label>
    </interactant>
    <organismsDiffer>false</organismsDiffer>
    <experiments>3</experiments>
</comment>
<comment type="interaction">
    <interactant intactId="EBI-2870359">
        <id>P22794</id>
    </interactant>
    <interactant intactId="EBI-349832">
        <id>Q9HD26</id>
        <label>GOPC</label>
    </interactant>
    <organismsDiffer>false</organismsDiffer>
    <experiments>2</experiments>
</comment>
<comment type="interaction">
    <interactant intactId="EBI-2870359">
        <id>P22794</id>
    </interactant>
    <interactant intactId="EBI-3932027">
        <id>P21145</id>
        <label>MAL</label>
    </interactant>
    <organismsDiffer>false</organismsDiffer>
    <experiments>3</experiments>
</comment>
<comment type="interaction">
    <interactant intactId="EBI-2870359">
        <id>P22794</id>
    </interactant>
    <interactant intactId="EBI-750078">
        <id>Q13021</id>
        <label>MALL</label>
    </interactant>
    <organismsDiffer>false</organismsDiffer>
    <experiments>3</experiments>
</comment>
<comment type="interaction">
    <interactant intactId="EBI-2870359">
        <id>P22794</id>
    </interactant>
    <interactant intactId="EBI-608347">
        <id>Q04941</id>
        <label>PLP2</label>
    </interactant>
    <organismsDiffer>false</organismsDiffer>
    <experiments>3</experiments>
</comment>
<comment type="interaction">
    <interactant intactId="EBI-2870359">
        <id>P22794</id>
    </interactant>
    <interactant intactId="EBI-10485931">
        <id>Q5VZY2</id>
        <label>PLPP4</label>
    </interactant>
    <organismsDiffer>false</organismsDiffer>
    <experiments>3</experiments>
</comment>
<comment type="interaction">
    <interactant intactId="EBI-2870359">
        <id>P22794</id>
    </interactant>
    <interactant intactId="EBI-10244780">
        <id>Q5QGT7</id>
        <label>RTP2</label>
    </interactant>
    <organismsDiffer>false</organismsDiffer>
    <experiments>3</experiments>
</comment>
<comment type="interaction">
    <interactant intactId="EBI-2870359">
        <id>P22794</id>
    </interactant>
    <interactant intactId="EBI-2819725">
        <id>Q9Y5Z9</id>
        <label>UBIAD1</label>
    </interactant>
    <organismsDiffer>false</organismsDiffer>
    <experiments>3</experiments>
</comment>
<comment type="subcellular location">
    <subcellularLocation>
        <location>Membrane</location>
        <topology>Single-pass type I membrane protein</topology>
    </subcellularLocation>
</comment>
<comment type="alternative products">
    <event type="alternative splicing"/>
    <isoform>
        <id>P22794-1</id>
        <name>1</name>
        <sequence type="displayed"/>
    </isoform>
    <isoform>
        <id>P22794-2</id>
        <name>2</name>
        <sequence type="described" ref="VSP_038859"/>
    </isoform>
</comment>
<comment type="similarity">
    <text evidence="5">Belongs to the EVI2A family.</text>
</comment>
<comment type="caution">
    <text evidence="5">It is uncertain whether Met-1 or Met-5 is the initiator.</text>
</comment>
<comment type="sequence caution" evidence="5">
    <conflict type="erroneous initiation">
        <sequence resource="EMBL-CDS" id="AAA52413"/>
    </conflict>
</comment>
<comment type="sequence caution" evidence="5">
    <conflict type="erroneous initiation">
        <sequence resource="EMBL-CDS" id="BAG35269"/>
    </conflict>
</comment>
<gene>
    <name type="primary">EVI2A</name>
    <name type="synonym">EVDA</name>
    <name type="synonym">EVI2</name>
</gene>
<sequence length="236" mass="26213">MPTDMEHTGHYLHLAFLMTTVFSLSPGTKANYTRLWANSTSSWDSVIQNKTGRNQNENINTNPITPEVDYKGNSTNMPETSHIVALTSKSEQELYIPSVVSNSPSTVQSIENTSKSHGEIFKKDVCAENNNNMAMLICLIIIAVLFLICTFLFLSTVVLANKVSSLRRSKQVGKRQPRSNGDFLASGLWPAESDTWKRTKQLTGPNLVMQSTGVLTATRERKDEEGTEKLTNKQIG</sequence>
<reference key="1">
    <citation type="journal article" date="1990" name="Genomics">
        <title>Identification and characterization of transcripts from the neurofibromatosis 1 region: the sequence and genomic structure of EVI2 and mapping of other transcripts.</title>
        <authorList>
            <person name="Cawthon R.M."/>
            <person name="O'Connell P."/>
            <person name="Buchberg A.M."/>
            <person name="Viskochil D."/>
            <person name="Weiss R.B."/>
            <person name="Culver M."/>
            <person name="Stevens J."/>
            <person name="Jenkins N.A."/>
            <person name="Copeland N.G."/>
            <person name="White R."/>
        </authorList>
    </citation>
    <scope>NUCLEOTIDE SEQUENCE [GENOMIC DNA]</scope>
</reference>
<reference key="2">
    <citation type="journal article" date="2004" name="Nat. Genet.">
        <title>Complete sequencing and characterization of 21,243 full-length human cDNAs.</title>
        <authorList>
            <person name="Ota T."/>
            <person name="Suzuki Y."/>
            <person name="Nishikawa T."/>
            <person name="Otsuki T."/>
            <person name="Sugiyama T."/>
            <person name="Irie R."/>
            <person name="Wakamatsu A."/>
            <person name="Hayashi K."/>
            <person name="Sato H."/>
            <person name="Nagai K."/>
            <person name="Kimura K."/>
            <person name="Makita H."/>
            <person name="Sekine M."/>
            <person name="Obayashi M."/>
            <person name="Nishi T."/>
            <person name="Shibahara T."/>
            <person name="Tanaka T."/>
            <person name="Ishii S."/>
            <person name="Yamamoto J."/>
            <person name="Saito K."/>
            <person name="Kawai Y."/>
            <person name="Isono Y."/>
            <person name="Nakamura Y."/>
            <person name="Nagahari K."/>
            <person name="Murakami K."/>
            <person name="Yasuda T."/>
            <person name="Iwayanagi T."/>
            <person name="Wagatsuma M."/>
            <person name="Shiratori A."/>
            <person name="Sudo H."/>
            <person name="Hosoiri T."/>
            <person name="Kaku Y."/>
            <person name="Kodaira H."/>
            <person name="Kondo H."/>
            <person name="Sugawara M."/>
            <person name="Takahashi M."/>
            <person name="Kanda K."/>
            <person name="Yokoi T."/>
            <person name="Furuya T."/>
            <person name="Kikkawa E."/>
            <person name="Omura Y."/>
            <person name="Abe K."/>
            <person name="Kamihara K."/>
            <person name="Katsuta N."/>
            <person name="Sato K."/>
            <person name="Tanikawa M."/>
            <person name="Yamazaki M."/>
            <person name="Ninomiya K."/>
            <person name="Ishibashi T."/>
            <person name="Yamashita H."/>
            <person name="Murakawa K."/>
            <person name="Fujimori K."/>
            <person name="Tanai H."/>
            <person name="Kimata M."/>
            <person name="Watanabe M."/>
            <person name="Hiraoka S."/>
            <person name="Chiba Y."/>
            <person name="Ishida S."/>
            <person name="Ono Y."/>
            <person name="Takiguchi S."/>
            <person name="Watanabe S."/>
            <person name="Yosida M."/>
            <person name="Hotuta T."/>
            <person name="Kusano J."/>
            <person name="Kanehori K."/>
            <person name="Takahashi-Fujii A."/>
            <person name="Hara H."/>
            <person name="Tanase T.-O."/>
            <person name="Nomura Y."/>
            <person name="Togiya S."/>
            <person name="Komai F."/>
            <person name="Hara R."/>
            <person name="Takeuchi K."/>
            <person name="Arita M."/>
            <person name="Imose N."/>
            <person name="Musashino K."/>
            <person name="Yuuki H."/>
            <person name="Oshima A."/>
            <person name="Sasaki N."/>
            <person name="Aotsuka S."/>
            <person name="Yoshikawa Y."/>
            <person name="Matsunawa H."/>
            <person name="Ichihara T."/>
            <person name="Shiohata N."/>
            <person name="Sano S."/>
            <person name="Moriya S."/>
            <person name="Momiyama H."/>
            <person name="Satoh N."/>
            <person name="Takami S."/>
            <person name="Terashima Y."/>
            <person name="Suzuki O."/>
            <person name="Nakagawa S."/>
            <person name="Senoh A."/>
            <person name="Mizoguchi H."/>
            <person name="Goto Y."/>
            <person name="Shimizu F."/>
            <person name="Wakebe H."/>
            <person name="Hishigaki H."/>
            <person name="Watanabe T."/>
            <person name="Sugiyama A."/>
            <person name="Takemoto M."/>
            <person name="Kawakami B."/>
            <person name="Yamazaki M."/>
            <person name="Watanabe K."/>
            <person name="Kumagai A."/>
            <person name="Itakura S."/>
            <person name="Fukuzumi Y."/>
            <person name="Fujimori Y."/>
            <person name="Komiyama M."/>
            <person name="Tashiro H."/>
            <person name="Tanigami A."/>
            <person name="Fujiwara T."/>
            <person name="Ono T."/>
            <person name="Yamada K."/>
            <person name="Fujii Y."/>
            <person name="Ozaki K."/>
            <person name="Hirao M."/>
            <person name="Ohmori Y."/>
            <person name="Kawabata A."/>
            <person name="Hikiji T."/>
            <person name="Kobatake N."/>
            <person name="Inagaki H."/>
            <person name="Ikema Y."/>
            <person name="Okamoto S."/>
            <person name="Okitani R."/>
            <person name="Kawakami T."/>
            <person name="Noguchi S."/>
            <person name="Itoh T."/>
            <person name="Shigeta K."/>
            <person name="Senba T."/>
            <person name="Matsumura K."/>
            <person name="Nakajima Y."/>
            <person name="Mizuno T."/>
            <person name="Morinaga M."/>
            <person name="Sasaki M."/>
            <person name="Togashi T."/>
            <person name="Oyama M."/>
            <person name="Hata H."/>
            <person name="Watanabe M."/>
            <person name="Komatsu T."/>
            <person name="Mizushima-Sugano J."/>
            <person name="Satoh T."/>
            <person name="Shirai Y."/>
            <person name="Takahashi Y."/>
            <person name="Nakagawa K."/>
            <person name="Okumura K."/>
            <person name="Nagase T."/>
            <person name="Nomura N."/>
            <person name="Kikuchi H."/>
            <person name="Masuho Y."/>
            <person name="Yamashita R."/>
            <person name="Nakai K."/>
            <person name="Yada T."/>
            <person name="Nakamura Y."/>
            <person name="Ohara O."/>
            <person name="Isogai T."/>
            <person name="Sugano S."/>
        </authorList>
    </citation>
    <scope>NUCLEOTIDE SEQUENCE [LARGE SCALE MRNA] (ISOFORMS 1 AND 2)</scope>
    <source>
        <tissue>Caudate nucleus</tissue>
    </source>
</reference>
<reference key="3">
    <citation type="journal article" date="2004" name="Genome Res.">
        <title>The status, quality, and expansion of the NIH full-length cDNA project: the Mammalian Gene Collection (MGC).</title>
        <authorList>
            <consortium name="The MGC Project Team"/>
        </authorList>
    </citation>
    <scope>NUCLEOTIDE SEQUENCE [LARGE SCALE MRNA] (ISOFORM 1)</scope>
    <source>
        <tissue>Pancreas</tissue>
    </source>
</reference>